<protein>
    <recommendedName>
        <fullName evidence="1">Beta-ketoacyl-[acyl-carrier-protein] synthase III</fullName>
        <shortName evidence="1">Beta-ketoacyl-ACP synthase III</shortName>
        <shortName evidence="1">KAS III</shortName>
        <ecNumber evidence="1">2.3.1.180</ecNumber>
    </recommendedName>
    <alternativeName>
        <fullName evidence="1">3-oxoacyl-[acyl-carrier-protein] synthase 3</fullName>
    </alternativeName>
    <alternativeName>
        <fullName evidence="1">3-oxoacyl-[acyl-carrier-protein] synthase III</fullName>
    </alternativeName>
</protein>
<sequence>MCVKKIRKASIWATGSYLPEKILSNSDLEQMVDTSDEWIVTRTGIKERRIAAPGEYASIMGAKAAEKAIEKAGLTKDQIECIIFSTSAPDYIFPSSAALAQAYLGIKEVPAFDCMAACTGYLYGLSVAKALVESGAYNNVLLIAADKLSSFVNYEDRNTCVLFGDGGSACVVGESRPGALEITNVNLGADGSVADLLSLPAGGSRLPASPETVAEGKHFIYMEGKEVFKHAVRRMESAAKICIAEAGLAEGDIDWLVPHQANERIIDAIAKRFEIDESKVFKTLSKYGNTAASSVCIALDELLQLHVINSGEYLLLVAFGGGLSWGAVVLRQVEG</sequence>
<name>FABH_CHLCV</name>
<organism>
    <name type="scientific">Chlamydia caviae (strain ATCC VR-813 / DSM 19441 / 03DC25 / GPIC)</name>
    <name type="common">Chlamydophila caviae</name>
    <dbReference type="NCBI Taxonomy" id="227941"/>
    <lineage>
        <taxon>Bacteria</taxon>
        <taxon>Pseudomonadati</taxon>
        <taxon>Chlamydiota</taxon>
        <taxon>Chlamydiia</taxon>
        <taxon>Chlamydiales</taxon>
        <taxon>Chlamydiaceae</taxon>
        <taxon>Chlamydia/Chlamydophila group</taxon>
        <taxon>Chlamydia</taxon>
    </lineage>
</organism>
<reference key="1">
    <citation type="journal article" date="2003" name="Nucleic Acids Res.">
        <title>Genome sequence of Chlamydophila caviae (Chlamydia psittaci GPIC): examining the role of niche-specific genes in the evolution of the Chlamydiaceae.</title>
        <authorList>
            <person name="Read T.D."/>
            <person name="Myers G.S.A."/>
            <person name="Brunham R.C."/>
            <person name="Nelson W.C."/>
            <person name="Paulsen I.T."/>
            <person name="Heidelberg J.F."/>
            <person name="Holtzapple E.K."/>
            <person name="Khouri H.M."/>
            <person name="Federova N.B."/>
            <person name="Carty H.A."/>
            <person name="Umayam L.A."/>
            <person name="Haft D.H."/>
            <person name="Peterson J.D."/>
            <person name="Beanan M.J."/>
            <person name="White O."/>
            <person name="Salzberg S.L."/>
            <person name="Hsia R.-C."/>
            <person name="McClarty G."/>
            <person name="Rank R.G."/>
            <person name="Bavoil P.M."/>
            <person name="Fraser C.M."/>
        </authorList>
    </citation>
    <scope>NUCLEOTIDE SEQUENCE [LARGE SCALE GENOMIC DNA]</scope>
    <source>
        <strain>ATCC VR-813 / DSM 19441 / 03DC25 / GPIC</strain>
    </source>
</reference>
<feature type="chain" id="PRO_0000110412" description="Beta-ketoacyl-[acyl-carrier-protein] synthase III">
    <location>
        <begin position="1"/>
        <end position="335"/>
    </location>
</feature>
<feature type="region of interest" description="ACP-binding" evidence="1">
    <location>
        <begin position="260"/>
        <end position="264"/>
    </location>
</feature>
<feature type="active site" evidence="1">
    <location>
        <position position="118"/>
    </location>
</feature>
<feature type="active site" evidence="1">
    <location>
        <position position="259"/>
    </location>
</feature>
<feature type="active site" evidence="1">
    <location>
        <position position="289"/>
    </location>
</feature>
<keyword id="KW-0012">Acyltransferase</keyword>
<keyword id="KW-0963">Cytoplasm</keyword>
<keyword id="KW-0275">Fatty acid biosynthesis</keyword>
<keyword id="KW-0276">Fatty acid metabolism</keyword>
<keyword id="KW-0444">Lipid biosynthesis</keyword>
<keyword id="KW-0443">Lipid metabolism</keyword>
<keyword id="KW-0511">Multifunctional enzyme</keyword>
<keyword id="KW-0808">Transferase</keyword>
<proteinExistence type="inferred from homology"/>
<comment type="function">
    <text evidence="1">Catalyzes the condensation reaction of fatty acid synthesis by the addition to an acyl acceptor of two carbons from malonyl-ACP. Catalyzes the first condensation reaction which initiates fatty acid synthesis and may therefore play a role in governing the total rate of fatty acid production. Possesses both acetoacetyl-ACP synthase and acetyl transacylase activities. Its substrate specificity determines the biosynthesis of branched-chain and/or straight-chain of fatty acids.</text>
</comment>
<comment type="catalytic activity">
    <reaction evidence="1">
        <text>malonyl-[ACP] + acetyl-CoA + H(+) = 3-oxobutanoyl-[ACP] + CO2 + CoA</text>
        <dbReference type="Rhea" id="RHEA:12080"/>
        <dbReference type="Rhea" id="RHEA-COMP:9623"/>
        <dbReference type="Rhea" id="RHEA-COMP:9625"/>
        <dbReference type="ChEBI" id="CHEBI:15378"/>
        <dbReference type="ChEBI" id="CHEBI:16526"/>
        <dbReference type="ChEBI" id="CHEBI:57287"/>
        <dbReference type="ChEBI" id="CHEBI:57288"/>
        <dbReference type="ChEBI" id="CHEBI:78449"/>
        <dbReference type="ChEBI" id="CHEBI:78450"/>
        <dbReference type="EC" id="2.3.1.180"/>
    </reaction>
</comment>
<comment type="pathway">
    <text evidence="1">Lipid metabolism; fatty acid biosynthesis.</text>
</comment>
<comment type="subunit">
    <text evidence="1">Homodimer.</text>
</comment>
<comment type="subcellular location">
    <subcellularLocation>
        <location evidence="1">Cytoplasm</location>
    </subcellularLocation>
</comment>
<comment type="domain">
    <text evidence="1">The last Arg residue of the ACP-binding site is essential for the weak association between ACP/AcpP and FabH.</text>
</comment>
<comment type="similarity">
    <text evidence="1">Belongs to the thiolase-like superfamily. FabH family.</text>
</comment>
<accession>Q820E6</accession>
<dbReference type="EC" id="2.3.1.180" evidence="1"/>
<dbReference type="EMBL" id="AE015925">
    <property type="protein sequence ID" value="AAP05228.1"/>
    <property type="molecule type" value="Genomic_DNA"/>
</dbReference>
<dbReference type="SMR" id="Q820E6"/>
<dbReference type="STRING" id="227941.CCA_00484"/>
<dbReference type="KEGG" id="cca:CCA_00484"/>
<dbReference type="eggNOG" id="COG0332">
    <property type="taxonomic scope" value="Bacteria"/>
</dbReference>
<dbReference type="HOGENOM" id="CLU_039592_3_1_0"/>
<dbReference type="UniPathway" id="UPA00094"/>
<dbReference type="Proteomes" id="UP000002193">
    <property type="component" value="Chromosome"/>
</dbReference>
<dbReference type="GO" id="GO:0005737">
    <property type="term" value="C:cytoplasm"/>
    <property type="evidence" value="ECO:0007669"/>
    <property type="project" value="UniProtKB-SubCell"/>
</dbReference>
<dbReference type="GO" id="GO:0004315">
    <property type="term" value="F:3-oxoacyl-[acyl-carrier-protein] synthase activity"/>
    <property type="evidence" value="ECO:0007669"/>
    <property type="project" value="InterPro"/>
</dbReference>
<dbReference type="GO" id="GO:0033818">
    <property type="term" value="F:beta-ketoacyl-acyl-carrier-protein synthase III activity"/>
    <property type="evidence" value="ECO:0007669"/>
    <property type="project" value="UniProtKB-UniRule"/>
</dbReference>
<dbReference type="GO" id="GO:0006633">
    <property type="term" value="P:fatty acid biosynthetic process"/>
    <property type="evidence" value="ECO:0007669"/>
    <property type="project" value="UniProtKB-UniRule"/>
</dbReference>
<dbReference type="GO" id="GO:0044550">
    <property type="term" value="P:secondary metabolite biosynthetic process"/>
    <property type="evidence" value="ECO:0007669"/>
    <property type="project" value="TreeGrafter"/>
</dbReference>
<dbReference type="CDD" id="cd00830">
    <property type="entry name" value="KAS_III"/>
    <property type="match status" value="1"/>
</dbReference>
<dbReference type="FunFam" id="3.40.47.10:FF:000004">
    <property type="entry name" value="3-oxoacyl-[acyl-carrier-protein] synthase 3"/>
    <property type="match status" value="1"/>
</dbReference>
<dbReference type="Gene3D" id="3.40.47.10">
    <property type="match status" value="1"/>
</dbReference>
<dbReference type="HAMAP" id="MF_01815">
    <property type="entry name" value="FabH"/>
    <property type="match status" value="1"/>
</dbReference>
<dbReference type="InterPro" id="IPR013747">
    <property type="entry name" value="ACP_syn_III_C"/>
</dbReference>
<dbReference type="InterPro" id="IPR013751">
    <property type="entry name" value="ACP_syn_III_N"/>
</dbReference>
<dbReference type="InterPro" id="IPR004655">
    <property type="entry name" value="FabH"/>
</dbReference>
<dbReference type="InterPro" id="IPR016039">
    <property type="entry name" value="Thiolase-like"/>
</dbReference>
<dbReference type="NCBIfam" id="TIGR00747">
    <property type="entry name" value="fabH"/>
    <property type="match status" value="1"/>
</dbReference>
<dbReference type="NCBIfam" id="NF006829">
    <property type="entry name" value="PRK09352.1"/>
    <property type="match status" value="1"/>
</dbReference>
<dbReference type="PANTHER" id="PTHR34069">
    <property type="entry name" value="3-OXOACYL-[ACYL-CARRIER-PROTEIN] SYNTHASE 3"/>
    <property type="match status" value="1"/>
</dbReference>
<dbReference type="PANTHER" id="PTHR34069:SF2">
    <property type="entry name" value="BETA-KETOACYL-[ACYL-CARRIER-PROTEIN] SYNTHASE III"/>
    <property type="match status" value="1"/>
</dbReference>
<dbReference type="Pfam" id="PF08545">
    <property type="entry name" value="ACP_syn_III"/>
    <property type="match status" value="1"/>
</dbReference>
<dbReference type="Pfam" id="PF08541">
    <property type="entry name" value="ACP_syn_III_C"/>
    <property type="match status" value="1"/>
</dbReference>
<dbReference type="SUPFAM" id="SSF53901">
    <property type="entry name" value="Thiolase-like"/>
    <property type="match status" value="1"/>
</dbReference>
<gene>
    <name evidence="1" type="primary">fabH</name>
    <name type="ordered locus">CCA_00484</name>
</gene>
<evidence type="ECO:0000255" key="1">
    <source>
        <dbReference type="HAMAP-Rule" id="MF_01815"/>
    </source>
</evidence>